<evidence type="ECO:0000255" key="1">
    <source>
        <dbReference type="HAMAP-Rule" id="MF_00199"/>
    </source>
</evidence>
<keyword id="KW-0378">Hydrolase</keyword>
<organism>
    <name type="scientific">Escherichia coli O8 (strain IAI1)</name>
    <dbReference type="NCBI Taxonomy" id="585034"/>
    <lineage>
        <taxon>Bacteria</taxon>
        <taxon>Pseudomonadati</taxon>
        <taxon>Pseudomonadota</taxon>
        <taxon>Gammaproteobacteria</taxon>
        <taxon>Enterobacterales</taxon>
        <taxon>Enterobacteriaceae</taxon>
        <taxon>Escherichia</taxon>
    </lineage>
</organism>
<proteinExistence type="inferred from homology"/>
<protein>
    <recommendedName>
        <fullName evidence="1">Bis(5'-nucleosyl)-tetraphosphatase, symmetrical</fullName>
        <ecNumber evidence="1">3.6.1.41</ecNumber>
    </recommendedName>
    <alternativeName>
        <fullName evidence="1">Ap4A hydrolase</fullName>
    </alternativeName>
    <alternativeName>
        <fullName evidence="1">Diadenosine 5',5'''-P1,P4-tetraphosphate pyrophosphohydrolase</fullName>
    </alternativeName>
    <alternativeName>
        <fullName evidence="1">Diadenosine tetraphosphatase</fullName>
    </alternativeName>
</protein>
<sequence length="280" mass="31283">MATYLIGDVHGCYDELIALLHKVEFTPGKDTLWLTGDLVARGPGSLDVLRYVKSLGDSVRLVLGNHDLHLLAVFAGISRNKPKDRLTPLLEAPDADELLNWLRRQPLLQIDEEKKLVMAHAGITPQWDLQTAKECARDVEAVLSSDSYPFFLDAMYGDMPNNWSPELRGLGRLRFITNAFTRMRFCFPNGQLDMYSKESPEEAPAPLKPWFAIPGPVAEEYSIAFGHWASLEGKGTPEGIYALDTGCCWGGSLTCLRWEDKQYFVQPSNRHKDLGEAAAS</sequence>
<reference key="1">
    <citation type="journal article" date="2009" name="PLoS Genet.">
        <title>Organised genome dynamics in the Escherichia coli species results in highly diverse adaptive paths.</title>
        <authorList>
            <person name="Touchon M."/>
            <person name="Hoede C."/>
            <person name="Tenaillon O."/>
            <person name="Barbe V."/>
            <person name="Baeriswyl S."/>
            <person name="Bidet P."/>
            <person name="Bingen E."/>
            <person name="Bonacorsi S."/>
            <person name="Bouchier C."/>
            <person name="Bouvet O."/>
            <person name="Calteau A."/>
            <person name="Chiapello H."/>
            <person name="Clermont O."/>
            <person name="Cruveiller S."/>
            <person name="Danchin A."/>
            <person name="Diard M."/>
            <person name="Dossat C."/>
            <person name="Karoui M.E."/>
            <person name="Frapy E."/>
            <person name="Garry L."/>
            <person name="Ghigo J.M."/>
            <person name="Gilles A.M."/>
            <person name="Johnson J."/>
            <person name="Le Bouguenec C."/>
            <person name="Lescat M."/>
            <person name="Mangenot S."/>
            <person name="Martinez-Jehanne V."/>
            <person name="Matic I."/>
            <person name="Nassif X."/>
            <person name="Oztas S."/>
            <person name="Petit M.A."/>
            <person name="Pichon C."/>
            <person name="Rouy Z."/>
            <person name="Ruf C.S."/>
            <person name="Schneider D."/>
            <person name="Tourret J."/>
            <person name="Vacherie B."/>
            <person name="Vallenet D."/>
            <person name="Medigue C."/>
            <person name="Rocha E.P.C."/>
            <person name="Denamur E."/>
        </authorList>
    </citation>
    <scope>NUCLEOTIDE SEQUENCE [LARGE SCALE GENOMIC DNA]</scope>
    <source>
        <strain>IAI1</strain>
    </source>
</reference>
<dbReference type="EC" id="3.6.1.41" evidence="1"/>
<dbReference type="EMBL" id="CU928160">
    <property type="protein sequence ID" value="CAQ96941.1"/>
    <property type="molecule type" value="Genomic_DNA"/>
</dbReference>
<dbReference type="RefSeq" id="WP_000257186.1">
    <property type="nucleotide sequence ID" value="NC_011741.1"/>
</dbReference>
<dbReference type="SMR" id="B7M0E6"/>
<dbReference type="KEGG" id="ecr:ECIAI1_0051"/>
<dbReference type="HOGENOM" id="CLU_056184_2_0_6"/>
<dbReference type="GO" id="GO:0008803">
    <property type="term" value="F:bis(5'-nucleosyl)-tetraphosphatase (symmetrical) activity"/>
    <property type="evidence" value="ECO:0007669"/>
    <property type="project" value="UniProtKB-UniRule"/>
</dbReference>
<dbReference type="CDD" id="cd07422">
    <property type="entry name" value="MPP_ApaH"/>
    <property type="match status" value="1"/>
</dbReference>
<dbReference type="FunFam" id="3.60.21.10:FF:000013">
    <property type="entry name" value="Bis(5'-nucleosyl)-tetraphosphatase, symmetrical"/>
    <property type="match status" value="1"/>
</dbReference>
<dbReference type="Gene3D" id="3.60.21.10">
    <property type="match status" value="1"/>
</dbReference>
<dbReference type="HAMAP" id="MF_00199">
    <property type="entry name" value="ApaH"/>
    <property type="match status" value="1"/>
</dbReference>
<dbReference type="InterPro" id="IPR004617">
    <property type="entry name" value="ApaH"/>
</dbReference>
<dbReference type="InterPro" id="IPR004843">
    <property type="entry name" value="Calcineurin-like_PHP_ApaH"/>
</dbReference>
<dbReference type="InterPro" id="IPR029052">
    <property type="entry name" value="Metallo-depent_PP-like"/>
</dbReference>
<dbReference type="NCBIfam" id="TIGR00668">
    <property type="entry name" value="apaH"/>
    <property type="match status" value="1"/>
</dbReference>
<dbReference type="NCBIfam" id="NF001204">
    <property type="entry name" value="PRK00166.1"/>
    <property type="match status" value="1"/>
</dbReference>
<dbReference type="PANTHER" id="PTHR40942">
    <property type="match status" value="1"/>
</dbReference>
<dbReference type="PANTHER" id="PTHR40942:SF4">
    <property type="entry name" value="CYTOCHROME C5"/>
    <property type="match status" value="1"/>
</dbReference>
<dbReference type="Pfam" id="PF00149">
    <property type="entry name" value="Metallophos"/>
    <property type="match status" value="1"/>
</dbReference>
<dbReference type="PIRSF" id="PIRSF000903">
    <property type="entry name" value="B5n-ttraPtase_sm"/>
    <property type="match status" value="1"/>
</dbReference>
<dbReference type="SUPFAM" id="SSF56300">
    <property type="entry name" value="Metallo-dependent phosphatases"/>
    <property type="match status" value="1"/>
</dbReference>
<gene>
    <name evidence="1" type="primary">apaH</name>
    <name type="ordered locus">ECIAI1_0051</name>
</gene>
<accession>B7M0E6</accession>
<name>APAH_ECO8A</name>
<feature type="chain" id="PRO_1000118694" description="Bis(5'-nucleosyl)-tetraphosphatase, symmetrical">
    <location>
        <begin position="1"/>
        <end position="280"/>
    </location>
</feature>
<comment type="function">
    <text evidence="1">Hydrolyzes diadenosine 5',5'''-P1,P4-tetraphosphate to yield ADP.</text>
</comment>
<comment type="catalytic activity">
    <reaction evidence="1">
        <text>P(1),P(4)-bis(5'-adenosyl) tetraphosphate + H2O = 2 ADP + 2 H(+)</text>
        <dbReference type="Rhea" id="RHEA:24252"/>
        <dbReference type="ChEBI" id="CHEBI:15377"/>
        <dbReference type="ChEBI" id="CHEBI:15378"/>
        <dbReference type="ChEBI" id="CHEBI:58141"/>
        <dbReference type="ChEBI" id="CHEBI:456216"/>
        <dbReference type="EC" id="3.6.1.41"/>
    </reaction>
</comment>
<comment type="similarity">
    <text evidence="1">Belongs to the Ap4A hydrolase family.</text>
</comment>